<proteinExistence type="inferred from homology"/>
<feature type="chain" id="PRO_1000072454" description="Chaperone protein HtpG">
    <location>
        <begin position="1"/>
        <end position="635"/>
    </location>
</feature>
<feature type="region of interest" description="A; substrate-binding" evidence="1">
    <location>
        <begin position="1"/>
        <end position="336"/>
    </location>
</feature>
<feature type="region of interest" description="B" evidence="1">
    <location>
        <begin position="337"/>
        <end position="556"/>
    </location>
</feature>
<feature type="region of interest" description="C" evidence="1">
    <location>
        <begin position="557"/>
        <end position="635"/>
    </location>
</feature>
<sequence length="635" mass="69353">MTTAEAAAPESRTFEADVAKLLHLMVHSVYSDKDVFLRELISNAADACEKLRYEAITTPALLGEDARPRITLAIDAEGGRLTVEDNGIGMSRDEMVEALGTIARSGTKAFMERIEAAAGGEKAELIGQFGVGFYSAFMVAEKVDVISRRAGADTANIWSSDGKGAYTVGEIDVAQAPARGTRVVLHLNEDGKAYADRFRIERIVKEQSGHVPVPIYIVEKLDAEPEEIADGVALWTKSKSDISAEDYADFYRSVAGQFDQPALTVHFRAEGRHEYTALVFVPSTKPFDLFEPERTGRVKLYVKRVFITDDAELLPRYLRFVRGVVDSADLPLNLSREMLQDSAILAAIRKGVTGRVLTELEKLAQSDAEAYAGIWSNFGAVLKEGLYEDYERRAQLLNLARFKTTTSGTAADTGWRTLKDYVADLKENQTAIYYITGDLARVEHAPQLEGFRARGVEVLLLPDQVDSFWVTAGVDYEGKPFKSVTQGAADLSLIPLPKSDEAETPEPEAKDTGDFIAFVKETLGDQVADVRASDRLTTSAVCLVAPESGIDRRLEKLLASAGRLGDAAKPVLEINPRHPLVAALAAHGASDSNFRADAAHLLLDQARVLDGDQPSDPQAFAERLMRVMQRGLPTA</sequence>
<dbReference type="EMBL" id="AP009384">
    <property type="protein sequence ID" value="BAF90350.1"/>
    <property type="molecule type" value="Genomic_DNA"/>
</dbReference>
<dbReference type="RefSeq" id="WP_012172872.1">
    <property type="nucleotide sequence ID" value="NC_009937.1"/>
</dbReference>
<dbReference type="SMR" id="A8HVS4"/>
<dbReference type="STRING" id="438753.AZC_4352"/>
<dbReference type="KEGG" id="azc:AZC_4352"/>
<dbReference type="eggNOG" id="COG0326">
    <property type="taxonomic scope" value="Bacteria"/>
</dbReference>
<dbReference type="HOGENOM" id="CLU_006684_3_0_5"/>
<dbReference type="Proteomes" id="UP000000270">
    <property type="component" value="Chromosome"/>
</dbReference>
<dbReference type="GO" id="GO:0005737">
    <property type="term" value="C:cytoplasm"/>
    <property type="evidence" value="ECO:0007669"/>
    <property type="project" value="UniProtKB-SubCell"/>
</dbReference>
<dbReference type="GO" id="GO:0005524">
    <property type="term" value="F:ATP binding"/>
    <property type="evidence" value="ECO:0007669"/>
    <property type="project" value="UniProtKB-UniRule"/>
</dbReference>
<dbReference type="GO" id="GO:0016887">
    <property type="term" value="F:ATP hydrolysis activity"/>
    <property type="evidence" value="ECO:0007669"/>
    <property type="project" value="InterPro"/>
</dbReference>
<dbReference type="GO" id="GO:0140662">
    <property type="term" value="F:ATP-dependent protein folding chaperone"/>
    <property type="evidence" value="ECO:0007669"/>
    <property type="project" value="InterPro"/>
</dbReference>
<dbReference type="GO" id="GO:0051082">
    <property type="term" value="F:unfolded protein binding"/>
    <property type="evidence" value="ECO:0007669"/>
    <property type="project" value="UniProtKB-UniRule"/>
</dbReference>
<dbReference type="CDD" id="cd16927">
    <property type="entry name" value="HATPase_Hsp90-like"/>
    <property type="match status" value="1"/>
</dbReference>
<dbReference type="FunFam" id="3.30.565.10:FF:000009">
    <property type="entry name" value="Molecular chaperone HtpG"/>
    <property type="match status" value="1"/>
</dbReference>
<dbReference type="Gene3D" id="3.30.230.80">
    <property type="match status" value="1"/>
</dbReference>
<dbReference type="Gene3D" id="3.40.50.11260">
    <property type="match status" value="1"/>
</dbReference>
<dbReference type="Gene3D" id="1.20.120.790">
    <property type="entry name" value="Heat shock protein 90, C-terminal domain"/>
    <property type="match status" value="1"/>
</dbReference>
<dbReference type="Gene3D" id="3.30.565.10">
    <property type="entry name" value="Histidine kinase-like ATPase, C-terminal domain"/>
    <property type="match status" value="1"/>
</dbReference>
<dbReference type="HAMAP" id="MF_00505">
    <property type="entry name" value="HSP90"/>
    <property type="match status" value="1"/>
</dbReference>
<dbReference type="InterPro" id="IPR036890">
    <property type="entry name" value="HATPase_C_sf"/>
</dbReference>
<dbReference type="InterPro" id="IPR019805">
    <property type="entry name" value="Heat_shock_protein_90_CS"/>
</dbReference>
<dbReference type="InterPro" id="IPR037196">
    <property type="entry name" value="HSP90_C"/>
</dbReference>
<dbReference type="InterPro" id="IPR001404">
    <property type="entry name" value="Hsp90_fam"/>
</dbReference>
<dbReference type="InterPro" id="IPR020575">
    <property type="entry name" value="Hsp90_N"/>
</dbReference>
<dbReference type="InterPro" id="IPR020568">
    <property type="entry name" value="Ribosomal_Su5_D2-typ_SF"/>
</dbReference>
<dbReference type="NCBIfam" id="NF003555">
    <property type="entry name" value="PRK05218.1"/>
    <property type="match status" value="1"/>
</dbReference>
<dbReference type="PANTHER" id="PTHR11528">
    <property type="entry name" value="HEAT SHOCK PROTEIN 90 FAMILY MEMBER"/>
    <property type="match status" value="1"/>
</dbReference>
<dbReference type="Pfam" id="PF13589">
    <property type="entry name" value="HATPase_c_3"/>
    <property type="match status" value="1"/>
</dbReference>
<dbReference type="Pfam" id="PF00183">
    <property type="entry name" value="HSP90"/>
    <property type="match status" value="1"/>
</dbReference>
<dbReference type="PIRSF" id="PIRSF002583">
    <property type="entry name" value="Hsp90"/>
    <property type="match status" value="1"/>
</dbReference>
<dbReference type="PRINTS" id="PR00775">
    <property type="entry name" value="HEATSHOCK90"/>
</dbReference>
<dbReference type="SMART" id="SM00387">
    <property type="entry name" value="HATPase_c"/>
    <property type="match status" value="1"/>
</dbReference>
<dbReference type="SUPFAM" id="SSF55874">
    <property type="entry name" value="ATPase domain of HSP90 chaperone/DNA topoisomerase II/histidine kinase"/>
    <property type="match status" value="1"/>
</dbReference>
<dbReference type="SUPFAM" id="SSF110942">
    <property type="entry name" value="HSP90 C-terminal domain"/>
    <property type="match status" value="1"/>
</dbReference>
<dbReference type="SUPFAM" id="SSF54211">
    <property type="entry name" value="Ribosomal protein S5 domain 2-like"/>
    <property type="match status" value="1"/>
</dbReference>
<dbReference type="PROSITE" id="PS00298">
    <property type="entry name" value="HSP90"/>
    <property type="match status" value="1"/>
</dbReference>
<accession>A8HVS4</accession>
<evidence type="ECO:0000255" key="1">
    <source>
        <dbReference type="HAMAP-Rule" id="MF_00505"/>
    </source>
</evidence>
<gene>
    <name evidence="1" type="primary">htpG</name>
    <name type="ordered locus">AZC_4352</name>
</gene>
<organism>
    <name type="scientific">Azorhizobium caulinodans (strain ATCC 43989 / DSM 5975 / JCM 20966 / LMG 6465 / NBRC 14845 / NCIMB 13405 / ORS 571)</name>
    <dbReference type="NCBI Taxonomy" id="438753"/>
    <lineage>
        <taxon>Bacteria</taxon>
        <taxon>Pseudomonadati</taxon>
        <taxon>Pseudomonadota</taxon>
        <taxon>Alphaproteobacteria</taxon>
        <taxon>Hyphomicrobiales</taxon>
        <taxon>Xanthobacteraceae</taxon>
        <taxon>Azorhizobium</taxon>
    </lineage>
</organism>
<reference key="1">
    <citation type="submission" date="2007-04" db="EMBL/GenBank/DDBJ databases">
        <title>Complete genome sequence of the nitrogen-fixing bacterium Azorhizobium caulinodans ORS571.</title>
        <authorList>
            <person name="Lee K.B."/>
            <person name="Backer P.D."/>
            <person name="Aono T."/>
            <person name="Liu C.T."/>
            <person name="Suzuki S."/>
            <person name="Suzuki T."/>
            <person name="Kaneko T."/>
            <person name="Yamada M."/>
            <person name="Tabata S."/>
            <person name="Kupfer D.M."/>
            <person name="Najar F.Z."/>
            <person name="Wiley G.B."/>
            <person name="Roe B."/>
            <person name="Binnewies T."/>
            <person name="Ussery D."/>
            <person name="Vereecke D."/>
            <person name="Gevers D."/>
            <person name="Holsters M."/>
            <person name="Oyaizu H."/>
        </authorList>
    </citation>
    <scope>NUCLEOTIDE SEQUENCE [LARGE SCALE GENOMIC DNA]</scope>
    <source>
        <strain>ATCC 43989 / DSM 5975 / JCM 20966 / LMG 6465 / NBRC 14845 / NCIMB 13405 / ORS 571</strain>
    </source>
</reference>
<comment type="function">
    <text evidence="1">Molecular chaperone. Has ATPase activity.</text>
</comment>
<comment type="subunit">
    <text evidence="1">Homodimer.</text>
</comment>
<comment type="subcellular location">
    <subcellularLocation>
        <location evidence="1">Cytoplasm</location>
    </subcellularLocation>
</comment>
<comment type="similarity">
    <text evidence="1">Belongs to the heat shock protein 90 family.</text>
</comment>
<protein>
    <recommendedName>
        <fullName evidence="1">Chaperone protein HtpG</fullName>
    </recommendedName>
    <alternativeName>
        <fullName evidence="1">Heat shock protein HtpG</fullName>
    </alternativeName>
    <alternativeName>
        <fullName evidence="1">High temperature protein G</fullName>
    </alternativeName>
</protein>
<name>HTPG_AZOC5</name>
<keyword id="KW-0067">ATP-binding</keyword>
<keyword id="KW-0143">Chaperone</keyword>
<keyword id="KW-0963">Cytoplasm</keyword>
<keyword id="KW-0547">Nucleotide-binding</keyword>
<keyword id="KW-1185">Reference proteome</keyword>
<keyword id="KW-0346">Stress response</keyword>